<gene>
    <name evidence="1" type="primary">rpsN</name>
    <name type="ordered locus">AAur_3754</name>
</gene>
<accession>A1RB22</accession>
<organism>
    <name type="scientific">Paenarthrobacter aurescens (strain TC1)</name>
    <dbReference type="NCBI Taxonomy" id="290340"/>
    <lineage>
        <taxon>Bacteria</taxon>
        <taxon>Bacillati</taxon>
        <taxon>Actinomycetota</taxon>
        <taxon>Actinomycetes</taxon>
        <taxon>Micrococcales</taxon>
        <taxon>Micrococcaceae</taxon>
        <taxon>Paenarthrobacter</taxon>
    </lineage>
</organism>
<evidence type="ECO:0000255" key="1">
    <source>
        <dbReference type="HAMAP-Rule" id="MF_00537"/>
    </source>
</evidence>
<evidence type="ECO:0000305" key="2"/>
<dbReference type="EMBL" id="CP000474">
    <property type="protein sequence ID" value="ABM09633.1"/>
    <property type="molecule type" value="Genomic_DNA"/>
</dbReference>
<dbReference type="RefSeq" id="WP_011776360.1">
    <property type="nucleotide sequence ID" value="NC_008711.1"/>
</dbReference>
<dbReference type="SMR" id="A1RB22"/>
<dbReference type="STRING" id="290340.AAur_3754"/>
<dbReference type="GeneID" id="97302622"/>
<dbReference type="KEGG" id="aau:AAur_3754"/>
<dbReference type="eggNOG" id="COG0199">
    <property type="taxonomic scope" value="Bacteria"/>
</dbReference>
<dbReference type="HOGENOM" id="CLU_139869_0_1_11"/>
<dbReference type="OrthoDB" id="9810484at2"/>
<dbReference type="Proteomes" id="UP000000637">
    <property type="component" value="Chromosome"/>
</dbReference>
<dbReference type="GO" id="GO:0015935">
    <property type="term" value="C:small ribosomal subunit"/>
    <property type="evidence" value="ECO:0007669"/>
    <property type="project" value="TreeGrafter"/>
</dbReference>
<dbReference type="GO" id="GO:0019843">
    <property type="term" value="F:rRNA binding"/>
    <property type="evidence" value="ECO:0007669"/>
    <property type="project" value="UniProtKB-UniRule"/>
</dbReference>
<dbReference type="GO" id="GO:0003735">
    <property type="term" value="F:structural constituent of ribosome"/>
    <property type="evidence" value="ECO:0007669"/>
    <property type="project" value="InterPro"/>
</dbReference>
<dbReference type="GO" id="GO:0006412">
    <property type="term" value="P:translation"/>
    <property type="evidence" value="ECO:0007669"/>
    <property type="project" value="UniProtKB-UniRule"/>
</dbReference>
<dbReference type="FunFam" id="1.10.287.1480:FF:000001">
    <property type="entry name" value="30S ribosomal protein S14"/>
    <property type="match status" value="1"/>
</dbReference>
<dbReference type="Gene3D" id="1.10.287.1480">
    <property type="match status" value="1"/>
</dbReference>
<dbReference type="HAMAP" id="MF_00537">
    <property type="entry name" value="Ribosomal_uS14_1"/>
    <property type="match status" value="1"/>
</dbReference>
<dbReference type="InterPro" id="IPR001209">
    <property type="entry name" value="Ribosomal_uS14"/>
</dbReference>
<dbReference type="InterPro" id="IPR023036">
    <property type="entry name" value="Ribosomal_uS14_bac/plastid"/>
</dbReference>
<dbReference type="NCBIfam" id="NF006477">
    <property type="entry name" value="PRK08881.1"/>
    <property type="match status" value="1"/>
</dbReference>
<dbReference type="PANTHER" id="PTHR19836">
    <property type="entry name" value="30S RIBOSOMAL PROTEIN S14"/>
    <property type="match status" value="1"/>
</dbReference>
<dbReference type="PANTHER" id="PTHR19836:SF23">
    <property type="entry name" value="SMALL RIBOSOMAL SUBUNIT PROTEIN US14A"/>
    <property type="match status" value="1"/>
</dbReference>
<dbReference type="Pfam" id="PF00253">
    <property type="entry name" value="Ribosomal_S14"/>
    <property type="match status" value="1"/>
</dbReference>
<dbReference type="SUPFAM" id="SSF57716">
    <property type="entry name" value="Glucocorticoid receptor-like (DNA-binding domain)"/>
    <property type="match status" value="1"/>
</dbReference>
<sequence>MAKKSKIARNEQRKVIVERYAAKRLELKKTLVDPNATDEAREAARLGLQKLPRNASPIRLRNRDQIDGRPRGTLQKFGISRVRFRDMAHRGELPGITKSSW</sequence>
<proteinExistence type="inferred from homology"/>
<feature type="chain" id="PRO_1000128296" description="Small ribosomal subunit protein uS14">
    <location>
        <begin position="1"/>
        <end position="101"/>
    </location>
</feature>
<protein>
    <recommendedName>
        <fullName evidence="1">Small ribosomal subunit protein uS14</fullName>
    </recommendedName>
    <alternativeName>
        <fullName evidence="2">30S ribosomal protein S14</fullName>
    </alternativeName>
</protein>
<reference key="1">
    <citation type="journal article" date="2006" name="PLoS Genet.">
        <title>Secrets of soil survival revealed by the genome sequence of Arthrobacter aurescens TC1.</title>
        <authorList>
            <person name="Mongodin E.F."/>
            <person name="Shapir N."/>
            <person name="Daugherty S.C."/>
            <person name="DeBoy R.T."/>
            <person name="Emerson J.B."/>
            <person name="Shvartzbeyn A."/>
            <person name="Radune D."/>
            <person name="Vamathevan J."/>
            <person name="Riggs F."/>
            <person name="Grinberg V."/>
            <person name="Khouri H.M."/>
            <person name="Wackett L.P."/>
            <person name="Nelson K.E."/>
            <person name="Sadowsky M.J."/>
        </authorList>
    </citation>
    <scope>NUCLEOTIDE SEQUENCE [LARGE SCALE GENOMIC DNA]</scope>
    <source>
        <strain>TC1</strain>
    </source>
</reference>
<keyword id="KW-0687">Ribonucleoprotein</keyword>
<keyword id="KW-0689">Ribosomal protein</keyword>
<keyword id="KW-0694">RNA-binding</keyword>
<keyword id="KW-0699">rRNA-binding</keyword>
<comment type="function">
    <text evidence="1">Binds 16S rRNA, required for the assembly of 30S particles and may also be responsible for determining the conformation of the 16S rRNA at the A site.</text>
</comment>
<comment type="subunit">
    <text evidence="1">Part of the 30S ribosomal subunit. Contacts proteins S3 and S10.</text>
</comment>
<comment type="similarity">
    <text evidence="1">Belongs to the universal ribosomal protein uS14 family.</text>
</comment>
<name>RS14_PAEAT</name>